<reference key="1">
    <citation type="journal article" date="2004" name="Nat. Biotechnol.">
        <title>The genome sequence of the anaerobic, sulfate-reducing bacterium Desulfovibrio vulgaris Hildenborough.</title>
        <authorList>
            <person name="Heidelberg J.F."/>
            <person name="Seshadri R."/>
            <person name="Haveman S.A."/>
            <person name="Hemme C.L."/>
            <person name="Paulsen I.T."/>
            <person name="Kolonay J.F."/>
            <person name="Eisen J.A."/>
            <person name="Ward N.L."/>
            <person name="Methe B.A."/>
            <person name="Brinkac L.M."/>
            <person name="Daugherty S.C."/>
            <person name="DeBoy R.T."/>
            <person name="Dodson R.J."/>
            <person name="Durkin A.S."/>
            <person name="Madupu R."/>
            <person name="Nelson W.C."/>
            <person name="Sullivan S.A."/>
            <person name="Fouts D.E."/>
            <person name="Haft D.H."/>
            <person name="Selengut J."/>
            <person name="Peterson J.D."/>
            <person name="Davidsen T.M."/>
            <person name="Zafar N."/>
            <person name="Zhou L."/>
            <person name="Radune D."/>
            <person name="Dimitrov G."/>
            <person name="Hance M."/>
            <person name="Tran K."/>
            <person name="Khouri H.M."/>
            <person name="Gill J."/>
            <person name="Utterback T.R."/>
            <person name="Feldblyum T.V."/>
            <person name="Wall J.D."/>
            <person name="Voordouw G."/>
            <person name="Fraser C.M."/>
        </authorList>
    </citation>
    <scope>NUCLEOTIDE SEQUENCE [LARGE SCALE GENOMIC DNA]</scope>
    <source>
        <strain>ATCC 29579 / DSM 644 / CCUG 34227 / NCIMB 8303 / VKM B-1760 / Hildenborough</strain>
    </source>
</reference>
<sequence length="253" mass="28341">MWARTAAWVFGLPETLREICYRRDNVKPVDELQKTIGHRFGDMELLLTAMTHSSWANEQAVPVEHNERLEFLGDAVLELCVSEELFRRFPSAREGDLTRMRSRLVSKPSLEGVARELRLDMSLRLGKGEESQGGRERGSLLSDALEAMLGAVFLDAGYIAAKGVVMRILGPHFPEALVPVRTKDYKSQLQELTQKLFRDRPVYTLLGSSGPEHDKQFDVRVVLPDGTVFEATGPSMKRAEQMAAARAVATLDK</sequence>
<comment type="function">
    <text evidence="1">Digests double-stranded RNA. Involved in the processing of primary rRNA transcript to yield the immediate precursors to the large and small rRNAs (23S and 16S). Processes some mRNAs, and tRNAs when they are encoded in the rRNA operon. Processes pre-crRNA and tracrRNA of type II CRISPR loci if present in the organism.</text>
</comment>
<comment type="catalytic activity">
    <reaction evidence="1">
        <text>Endonucleolytic cleavage to 5'-phosphomonoester.</text>
        <dbReference type="EC" id="3.1.26.3"/>
    </reaction>
</comment>
<comment type="cofactor">
    <cofactor evidence="1">
        <name>Mg(2+)</name>
        <dbReference type="ChEBI" id="CHEBI:18420"/>
    </cofactor>
</comment>
<comment type="subunit">
    <text evidence="1">Homodimer.</text>
</comment>
<comment type="subcellular location">
    <subcellularLocation>
        <location evidence="1">Cytoplasm</location>
    </subcellularLocation>
</comment>
<comment type="similarity">
    <text evidence="1">Belongs to the ribonuclease III family.</text>
</comment>
<keyword id="KW-0963">Cytoplasm</keyword>
<keyword id="KW-0255">Endonuclease</keyword>
<keyword id="KW-0378">Hydrolase</keyword>
<keyword id="KW-0460">Magnesium</keyword>
<keyword id="KW-0479">Metal-binding</keyword>
<keyword id="KW-0507">mRNA processing</keyword>
<keyword id="KW-0540">Nuclease</keyword>
<keyword id="KW-1185">Reference proteome</keyword>
<keyword id="KW-0694">RNA-binding</keyword>
<keyword id="KW-0698">rRNA processing</keyword>
<keyword id="KW-0699">rRNA-binding</keyword>
<keyword id="KW-0819">tRNA processing</keyword>
<accession>Q72C44</accession>
<evidence type="ECO:0000255" key="1">
    <source>
        <dbReference type="HAMAP-Rule" id="MF_00104"/>
    </source>
</evidence>
<feature type="chain" id="PRO_0000228526" description="Ribonuclease 3">
    <location>
        <begin position="1"/>
        <end position="253"/>
    </location>
</feature>
<feature type="domain" description="RNase III" evidence="1">
    <location>
        <begin position="29"/>
        <end position="157"/>
    </location>
</feature>
<feature type="domain" description="DRBM" evidence="1">
    <location>
        <begin position="184"/>
        <end position="253"/>
    </location>
</feature>
<feature type="active site" evidence="1">
    <location>
        <position position="74"/>
    </location>
</feature>
<feature type="active site" evidence="1">
    <location>
        <position position="146"/>
    </location>
</feature>
<feature type="binding site" evidence="1">
    <location>
        <position position="70"/>
    </location>
    <ligand>
        <name>Mg(2+)</name>
        <dbReference type="ChEBI" id="CHEBI:18420"/>
    </ligand>
</feature>
<feature type="binding site" evidence="1">
    <location>
        <position position="143"/>
    </location>
    <ligand>
        <name>Mg(2+)</name>
        <dbReference type="ChEBI" id="CHEBI:18420"/>
    </ligand>
</feature>
<feature type="binding site" evidence="1">
    <location>
        <position position="146"/>
    </location>
    <ligand>
        <name>Mg(2+)</name>
        <dbReference type="ChEBI" id="CHEBI:18420"/>
    </ligand>
</feature>
<protein>
    <recommendedName>
        <fullName evidence="1">Ribonuclease 3</fullName>
        <ecNumber evidence="1">3.1.26.3</ecNumber>
    </recommendedName>
    <alternativeName>
        <fullName evidence="1">Ribonuclease III</fullName>
        <shortName evidence="1">RNase III</shortName>
    </alternativeName>
</protein>
<organism>
    <name type="scientific">Nitratidesulfovibrio vulgaris (strain ATCC 29579 / DSM 644 / CCUG 34227 / NCIMB 8303 / VKM B-1760 / Hildenborough)</name>
    <name type="common">Desulfovibrio vulgaris</name>
    <dbReference type="NCBI Taxonomy" id="882"/>
    <lineage>
        <taxon>Bacteria</taxon>
        <taxon>Pseudomonadati</taxon>
        <taxon>Thermodesulfobacteriota</taxon>
        <taxon>Desulfovibrionia</taxon>
        <taxon>Desulfovibrionales</taxon>
        <taxon>Desulfovibrionaceae</taxon>
        <taxon>Nitratidesulfovibrio</taxon>
    </lineage>
</organism>
<name>RNC_NITV2</name>
<proteinExistence type="inferred from homology"/>
<gene>
    <name evidence="1" type="primary">rnc</name>
    <name type="ordered locus">DVU_1440</name>
</gene>
<dbReference type="EC" id="3.1.26.3" evidence="1"/>
<dbReference type="EMBL" id="AE017285">
    <property type="protein sequence ID" value="AAS95918.1"/>
    <property type="molecule type" value="Genomic_DNA"/>
</dbReference>
<dbReference type="RefSeq" id="WP_010938733.1">
    <property type="nucleotide sequence ID" value="NC_002937.3"/>
</dbReference>
<dbReference type="RefSeq" id="YP_010659.1">
    <property type="nucleotide sequence ID" value="NC_002937.3"/>
</dbReference>
<dbReference type="SMR" id="Q72C44"/>
<dbReference type="STRING" id="882.DVU_1440"/>
<dbReference type="PaxDb" id="882-DVU_1440"/>
<dbReference type="EnsemblBacteria" id="AAS95918">
    <property type="protein sequence ID" value="AAS95918"/>
    <property type="gene ID" value="DVU_1440"/>
</dbReference>
<dbReference type="KEGG" id="dvu:DVU_1440"/>
<dbReference type="PATRIC" id="fig|882.5.peg.1339"/>
<dbReference type="eggNOG" id="COG0571">
    <property type="taxonomic scope" value="Bacteria"/>
</dbReference>
<dbReference type="HOGENOM" id="CLU_000907_1_3_7"/>
<dbReference type="OrthoDB" id="9805026at2"/>
<dbReference type="PhylomeDB" id="Q72C44"/>
<dbReference type="Proteomes" id="UP000002194">
    <property type="component" value="Chromosome"/>
</dbReference>
<dbReference type="GO" id="GO:0005737">
    <property type="term" value="C:cytoplasm"/>
    <property type="evidence" value="ECO:0007669"/>
    <property type="project" value="UniProtKB-SubCell"/>
</dbReference>
<dbReference type="GO" id="GO:0003725">
    <property type="term" value="F:double-stranded RNA binding"/>
    <property type="evidence" value="ECO:0007669"/>
    <property type="project" value="TreeGrafter"/>
</dbReference>
<dbReference type="GO" id="GO:0046872">
    <property type="term" value="F:metal ion binding"/>
    <property type="evidence" value="ECO:0007669"/>
    <property type="project" value="UniProtKB-KW"/>
</dbReference>
<dbReference type="GO" id="GO:0004525">
    <property type="term" value="F:ribonuclease III activity"/>
    <property type="evidence" value="ECO:0007669"/>
    <property type="project" value="UniProtKB-UniRule"/>
</dbReference>
<dbReference type="GO" id="GO:0019843">
    <property type="term" value="F:rRNA binding"/>
    <property type="evidence" value="ECO:0007669"/>
    <property type="project" value="UniProtKB-KW"/>
</dbReference>
<dbReference type="GO" id="GO:0006397">
    <property type="term" value="P:mRNA processing"/>
    <property type="evidence" value="ECO:0007669"/>
    <property type="project" value="UniProtKB-UniRule"/>
</dbReference>
<dbReference type="GO" id="GO:0010468">
    <property type="term" value="P:regulation of gene expression"/>
    <property type="evidence" value="ECO:0007669"/>
    <property type="project" value="TreeGrafter"/>
</dbReference>
<dbReference type="GO" id="GO:0006364">
    <property type="term" value="P:rRNA processing"/>
    <property type="evidence" value="ECO:0007669"/>
    <property type="project" value="UniProtKB-UniRule"/>
</dbReference>
<dbReference type="GO" id="GO:0008033">
    <property type="term" value="P:tRNA processing"/>
    <property type="evidence" value="ECO:0007669"/>
    <property type="project" value="UniProtKB-KW"/>
</dbReference>
<dbReference type="CDD" id="cd10845">
    <property type="entry name" value="DSRM_RNAse_III_family"/>
    <property type="match status" value="1"/>
</dbReference>
<dbReference type="CDD" id="cd00593">
    <property type="entry name" value="RIBOc"/>
    <property type="match status" value="1"/>
</dbReference>
<dbReference type="FunFam" id="1.10.1520.10:FF:000001">
    <property type="entry name" value="Ribonuclease 3"/>
    <property type="match status" value="1"/>
</dbReference>
<dbReference type="Gene3D" id="3.30.160.20">
    <property type="match status" value="1"/>
</dbReference>
<dbReference type="Gene3D" id="1.10.1520.10">
    <property type="entry name" value="Ribonuclease III domain"/>
    <property type="match status" value="1"/>
</dbReference>
<dbReference type="HAMAP" id="MF_00104">
    <property type="entry name" value="RNase_III"/>
    <property type="match status" value="1"/>
</dbReference>
<dbReference type="InterPro" id="IPR014720">
    <property type="entry name" value="dsRBD_dom"/>
</dbReference>
<dbReference type="InterPro" id="IPR011907">
    <property type="entry name" value="RNase_III"/>
</dbReference>
<dbReference type="InterPro" id="IPR000999">
    <property type="entry name" value="RNase_III_dom"/>
</dbReference>
<dbReference type="InterPro" id="IPR036389">
    <property type="entry name" value="RNase_III_sf"/>
</dbReference>
<dbReference type="NCBIfam" id="TIGR02191">
    <property type="entry name" value="RNaseIII"/>
    <property type="match status" value="1"/>
</dbReference>
<dbReference type="PANTHER" id="PTHR11207:SF0">
    <property type="entry name" value="RIBONUCLEASE 3"/>
    <property type="match status" value="1"/>
</dbReference>
<dbReference type="PANTHER" id="PTHR11207">
    <property type="entry name" value="RIBONUCLEASE III"/>
    <property type="match status" value="1"/>
</dbReference>
<dbReference type="Pfam" id="PF00035">
    <property type="entry name" value="dsrm"/>
    <property type="match status" value="1"/>
</dbReference>
<dbReference type="Pfam" id="PF14622">
    <property type="entry name" value="Ribonucleas_3_3"/>
    <property type="match status" value="1"/>
</dbReference>
<dbReference type="SMART" id="SM00358">
    <property type="entry name" value="DSRM"/>
    <property type="match status" value="1"/>
</dbReference>
<dbReference type="SMART" id="SM00535">
    <property type="entry name" value="RIBOc"/>
    <property type="match status" value="1"/>
</dbReference>
<dbReference type="SUPFAM" id="SSF54768">
    <property type="entry name" value="dsRNA-binding domain-like"/>
    <property type="match status" value="1"/>
</dbReference>
<dbReference type="SUPFAM" id="SSF69065">
    <property type="entry name" value="RNase III domain-like"/>
    <property type="match status" value="1"/>
</dbReference>
<dbReference type="PROSITE" id="PS50137">
    <property type="entry name" value="DS_RBD"/>
    <property type="match status" value="1"/>
</dbReference>
<dbReference type="PROSITE" id="PS00517">
    <property type="entry name" value="RNASE_3_1"/>
    <property type="match status" value="1"/>
</dbReference>
<dbReference type="PROSITE" id="PS50142">
    <property type="entry name" value="RNASE_3_2"/>
    <property type="match status" value="1"/>
</dbReference>